<evidence type="ECO:0000250" key="1"/>
<evidence type="ECO:0000255" key="2"/>
<evidence type="ECO:0000269" key="3">
    <source>
    </source>
</evidence>
<evidence type="ECO:0000269" key="4">
    <source>
    </source>
</evidence>
<evidence type="ECO:0000269" key="5">
    <source>
    </source>
</evidence>
<evidence type="ECO:0000303" key="6">
    <source>
    </source>
</evidence>
<evidence type="ECO:0000303" key="7">
    <source>
    </source>
</evidence>
<evidence type="ECO:0000305" key="8"/>
<evidence type="ECO:0000312" key="9">
    <source>
        <dbReference type="EMBL" id="AGI62067.1"/>
    </source>
</evidence>
<evidence type="ECO:0000312" key="10">
    <source>
        <dbReference type="Proteomes" id="UP000005640"/>
    </source>
</evidence>
<proteinExistence type="evidence at protein level"/>
<reference key="1">
    <citation type="journal article" date="1988" name="Genomics">
        <title>Molecular structure and sequence homology of a gene related to alpha 1-antitrypsin in the human genome.</title>
        <authorList>
            <person name="Bao J.J."/>
            <person name="Reed-Fourquet L."/>
            <person name="Sifers R.N."/>
            <person name="Kidd V.J."/>
            <person name="Woo S.L.C."/>
        </authorList>
    </citation>
    <scope>NUCLEOTIDE SEQUENCE [GENOMIC DNA]</scope>
</reference>
<reference evidence="9" key="2">
    <citation type="journal article" date="2013" name="PLoS ONE">
        <title>SERPINA2 is a novel gene with a divergent function from SERPINA1.</title>
        <authorList>
            <person name="Marques P.I."/>
            <person name="Ferreira Z."/>
            <person name="Martins M."/>
            <person name="Figueiredo J."/>
            <person name="Silva D.I."/>
            <person name="Castro P."/>
            <person name="Morales-Hojas R."/>
            <person name="Simoes-Correia J."/>
            <person name="Seixas S."/>
        </authorList>
    </citation>
    <scope>NUCLEOTIDE SEQUENCE [MRNA]</scope>
    <scope>VARIANTS PRO-330 AND LYS-342</scope>
    <scope>SUBCELLULAR LOCATION</scope>
    <scope>TISSUE SPECIFICITY</scope>
    <scope>GLYCOSYLATION</scope>
    <scope>INTERACTION WITH CANX AND PDIA3</scope>
    <source>
        <tissue evidence="9">Testis</tissue>
    </source>
</reference>
<reference evidence="10" key="3">
    <citation type="journal article" date="2003" name="Nature">
        <title>The DNA sequence and analysis of human chromosome 14.</title>
        <authorList>
            <person name="Heilig R."/>
            <person name="Eckenberg R."/>
            <person name="Petit J.-L."/>
            <person name="Fonknechten N."/>
            <person name="Da Silva C."/>
            <person name="Cattolico L."/>
            <person name="Levy M."/>
            <person name="Barbe V."/>
            <person name="De Berardinis V."/>
            <person name="Ureta-Vidal A."/>
            <person name="Pelletier E."/>
            <person name="Vico V."/>
            <person name="Anthouard V."/>
            <person name="Rowen L."/>
            <person name="Madan A."/>
            <person name="Qin S."/>
            <person name="Sun H."/>
            <person name="Du H."/>
            <person name="Pepin K."/>
            <person name="Artiguenave F."/>
            <person name="Robert C."/>
            <person name="Cruaud C."/>
            <person name="Bruels T."/>
            <person name="Jaillon O."/>
            <person name="Friedlander L."/>
            <person name="Samson G."/>
            <person name="Brottier P."/>
            <person name="Cure S."/>
            <person name="Segurens B."/>
            <person name="Aniere F."/>
            <person name="Samain S."/>
            <person name="Crespeau H."/>
            <person name="Abbasi N."/>
            <person name="Aiach N."/>
            <person name="Boscus D."/>
            <person name="Dickhoff R."/>
            <person name="Dors M."/>
            <person name="Dubois I."/>
            <person name="Friedman C."/>
            <person name="Gouyvenoux M."/>
            <person name="James R."/>
            <person name="Madan A."/>
            <person name="Mairey-Estrada B."/>
            <person name="Mangenot S."/>
            <person name="Martins N."/>
            <person name="Menard M."/>
            <person name="Oztas S."/>
            <person name="Ratcliffe A."/>
            <person name="Shaffer T."/>
            <person name="Trask B."/>
            <person name="Vacherie B."/>
            <person name="Bellemere C."/>
            <person name="Belser C."/>
            <person name="Besnard-Gonnet M."/>
            <person name="Bartol-Mavel D."/>
            <person name="Boutard M."/>
            <person name="Briez-Silla S."/>
            <person name="Combette S."/>
            <person name="Dufosse-Laurent V."/>
            <person name="Ferron C."/>
            <person name="Lechaplais C."/>
            <person name="Louesse C."/>
            <person name="Muselet D."/>
            <person name="Magdelenat G."/>
            <person name="Pateau E."/>
            <person name="Petit E."/>
            <person name="Sirvain-Trukniewicz P."/>
            <person name="Trybou A."/>
            <person name="Vega-Czarny N."/>
            <person name="Bataille E."/>
            <person name="Bluet E."/>
            <person name="Bordelais I."/>
            <person name="Dubois M."/>
            <person name="Dumont C."/>
            <person name="Guerin T."/>
            <person name="Haffray S."/>
            <person name="Hammadi R."/>
            <person name="Muanga J."/>
            <person name="Pellouin V."/>
            <person name="Robert D."/>
            <person name="Wunderle E."/>
            <person name="Gauguet G."/>
            <person name="Roy A."/>
            <person name="Sainte-Marthe L."/>
            <person name="Verdier J."/>
            <person name="Verdier-Discala C."/>
            <person name="Hillier L.W."/>
            <person name="Fulton L."/>
            <person name="McPherson J."/>
            <person name="Matsuda F."/>
            <person name="Wilson R."/>
            <person name="Scarpelli C."/>
            <person name="Gyapay G."/>
            <person name="Wincker P."/>
            <person name="Saurin W."/>
            <person name="Quetier F."/>
            <person name="Waterston R."/>
            <person name="Hood L."/>
            <person name="Weissenbach J."/>
        </authorList>
    </citation>
    <scope>NUCLEOTIDE SEQUENCE [LARGE SCALE GENOMIC DNA]</scope>
</reference>
<reference key="4">
    <citation type="journal article" date="1997" name="Mamm. Genome">
        <title>Molecular linkage of the human alpha 1-antitrypsin and corticosteroid-binding globulin genes on chromosome 14q32.1.</title>
        <authorList>
            <person name="Rollini P."/>
            <person name="Fournier R.E."/>
        </authorList>
    </citation>
    <scope>POLYMORPHISM</scope>
</reference>
<reference key="5">
    <citation type="journal article" date="2007" name="Mol. Biol. Evol.">
        <title>Sequence diversity at the proximal 14q32.1 SERPIN subcluster: evidence for natural selection favoring the pseudogenization of SERPINA2.</title>
        <authorList>
            <person name="Seixas S."/>
            <person name="Suriano G."/>
            <person name="Carvalho F."/>
            <person name="Seruca R."/>
            <person name="Rocha J."/>
            <person name="Di Rienzo A."/>
        </authorList>
    </citation>
    <scope>POLYMORPHISM</scope>
    <scope>TISSUE SPECIFICITY</scope>
</reference>
<gene>
    <name type="primary">SERPINA2</name>
    <name type="synonym">ARGS</name>
    <name evidence="6 7" type="synonym">ATR</name>
    <name evidence="7" type="synonym">PIL</name>
    <name type="synonym">SERPINA2P</name>
</gene>
<dbReference type="EMBL" id="M19684">
    <property type="protein sequence ID" value="AAA51544.1"/>
    <property type="molecule type" value="Genomic_DNA"/>
</dbReference>
<dbReference type="EMBL" id="M19685">
    <property type="protein sequence ID" value="AAA51544.1"/>
    <property type="status" value="JOINED"/>
    <property type="molecule type" value="Genomic_DNA"/>
</dbReference>
<dbReference type="EMBL" id="JX680599">
    <property type="protein sequence ID" value="AGI62067.1"/>
    <property type="molecule type" value="mRNA"/>
</dbReference>
<dbReference type="EMBL" id="AC235087">
    <property type="status" value="NOT_ANNOTATED_CDS"/>
    <property type="molecule type" value="Genomic_DNA"/>
</dbReference>
<dbReference type="PIR" id="A28882">
    <property type="entry name" value="A28882"/>
</dbReference>
<dbReference type="RefSeq" id="NP_006211.2">
    <property type="nucleotide sequence ID" value="NM_006220.3"/>
</dbReference>
<dbReference type="SMR" id="P20848"/>
<dbReference type="FunCoup" id="P20848">
    <property type="interactions" value="83"/>
</dbReference>
<dbReference type="IntAct" id="P20848">
    <property type="interactions" value="5"/>
</dbReference>
<dbReference type="BindingDB" id="P20848"/>
<dbReference type="ChEMBL" id="CHEMBL4879431"/>
<dbReference type="MEROPS" id="I04.952"/>
<dbReference type="GlyCosmos" id="P20848">
    <property type="glycosylation" value="4 sites, No reported glycans"/>
</dbReference>
<dbReference type="GlyGen" id="P20848">
    <property type="glycosylation" value="4 sites"/>
</dbReference>
<dbReference type="iPTMnet" id="P20848"/>
<dbReference type="PhosphoSitePlus" id="P20848"/>
<dbReference type="BioMuta" id="SERPINA2"/>
<dbReference type="DMDM" id="112891"/>
<dbReference type="jPOST" id="P20848"/>
<dbReference type="MassIVE" id="P20848"/>
<dbReference type="PeptideAtlas" id="P20848"/>
<dbReference type="ProteomicsDB" id="53815"/>
<dbReference type="DNASU" id="390502"/>
<dbReference type="Ensembl" id="ENST00000616052.3">
    <property type="protein sequence ID" value="ENSP00000477957.2"/>
    <property type="gene ID" value="ENSG00000274821.5"/>
</dbReference>
<dbReference type="GeneID" id="390502"/>
<dbReference type="KEGG" id="hsa:390502"/>
<dbReference type="MANE-Select" id="ENST00000616052.3">
    <property type="protein sequence ID" value="ENSP00000477957.2"/>
    <property type="RefSeq nucleotide sequence ID" value="NM_006220.3"/>
    <property type="RefSeq protein sequence ID" value="NP_006211.2"/>
</dbReference>
<dbReference type="AGR" id="HGNC:8985"/>
<dbReference type="CTD" id="390502"/>
<dbReference type="DisGeNET" id="390502"/>
<dbReference type="GeneCards" id="SERPINA2"/>
<dbReference type="HGNC" id="HGNC:8985">
    <property type="gene designation" value="SERPINA2"/>
</dbReference>
<dbReference type="MIM" id="107410">
    <property type="type" value="gene"/>
</dbReference>
<dbReference type="neXtProt" id="NX_P20848"/>
<dbReference type="InParanoid" id="P20848"/>
<dbReference type="OrthoDB" id="9518664at2759"/>
<dbReference type="PAN-GO" id="P20848">
    <property type="GO annotations" value="3 GO annotations based on evolutionary models"/>
</dbReference>
<dbReference type="PhylomeDB" id="P20848"/>
<dbReference type="BioGRID-ORCS" id="390502">
    <property type="hits" value="2 hits in 39 CRISPR screens"/>
</dbReference>
<dbReference type="GenomeRNAi" id="390502"/>
<dbReference type="Pharos" id="P20848">
    <property type="development level" value="Tchem"/>
</dbReference>
<dbReference type="PRO" id="PR:P20848"/>
<dbReference type="Proteomes" id="UP000005640">
    <property type="component" value="Unplaced"/>
</dbReference>
<dbReference type="RNAct" id="P20848">
    <property type="molecule type" value="protein"/>
</dbReference>
<dbReference type="GO" id="GO:0005783">
    <property type="term" value="C:endoplasmic reticulum"/>
    <property type="evidence" value="ECO:0000314"/>
    <property type="project" value="UniProtKB"/>
</dbReference>
<dbReference type="GO" id="GO:0005615">
    <property type="term" value="C:extracellular space"/>
    <property type="evidence" value="ECO:0000318"/>
    <property type="project" value="GO_Central"/>
</dbReference>
<dbReference type="GO" id="GO:0004867">
    <property type="term" value="F:serine-type endopeptidase inhibitor activity"/>
    <property type="evidence" value="ECO:0000318"/>
    <property type="project" value="GO_Central"/>
</dbReference>
<dbReference type="CDD" id="cd19550">
    <property type="entry name" value="serpinA2_PIL"/>
    <property type="match status" value="1"/>
</dbReference>
<dbReference type="FunFam" id="2.30.39.10:FF:000003">
    <property type="entry name" value="alpha-1-antitrypsin isoform X1"/>
    <property type="match status" value="1"/>
</dbReference>
<dbReference type="FunFam" id="3.30.497.10:FF:000001">
    <property type="entry name" value="Serine protease inhibitor"/>
    <property type="match status" value="1"/>
</dbReference>
<dbReference type="Gene3D" id="2.30.39.10">
    <property type="entry name" value="Alpha-1-antitrypsin, domain 1"/>
    <property type="match status" value="1"/>
</dbReference>
<dbReference type="Gene3D" id="3.30.497.10">
    <property type="entry name" value="Antithrombin, subunit I, domain 2"/>
    <property type="match status" value="1"/>
</dbReference>
<dbReference type="InterPro" id="IPR023795">
    <property type="entry name" value="Serpin_CS"/>
</dbReference>
<dbReference type="InterPro" id="IPR023796">
    <property type="entry name" value="Serpin_dom"/>
</dbReference>
<dbReference type="InterPro" id="IPR000215">
    <property type="entry name" value="Serpin_fam"/>
</dbReference>
<dbReference type="InterPro" id="IPR036186">
    <property type="entry name" value="Serpin_sf"/>
</dbReference>
<dbReference type="InterPro" id="IPR042178">
    <property type="entry name" value="Serpin_sf_1"/>
</dbReference>
<dbReference type="InterPro" id="IPR042185">
    <property type="entry name" value="Serpin_sf_2"/>
</dbReference>
<dbReference type="PANTHER" id="PTHR11461:SF289">
    <property type="entry name" value="ALPHA-1-ANTITRYPSIN-RELATED PROTEIN"/>
    <property type="match status" value="1"/>
</dbReference>
<dbReference type="PANTHER" id="PTHR11461">
    <property type="entry name" value="SERINE PROTEASE INHIBITOR, SERPIN"/>
    <property type="match status" value="1"/>
</dbReference>
<dbReference type="Pfam" id="PF00079">
    <property type="entry name" value="Serpin"/>
    <property type="match status" value="1"/>
</dbReference>
<dbReference type="SMART" id="SM00093">
    <property type="entry name" value="SERPIN"/>
    <property type="match status" value="1"/>
</dbReference>
<dbReference type="SUPFAM" id="SSF56574">
    <property type="entry name" value="Serpins"/>
    <property type="match status" value="1"/>
</dbReference>
<dbReference type="PROSITE" id="PS00284">
    <property type="entry name" value="SERPIN"/>
    <property type="match status" value="1"/>
</dbReference>
<keyword id="KW-0256">Endoplasmic reticulum</keyword>
<keyword id="KW-0325">Glycoprotein</keyword>
<keyword id="KW-0646">Protease inhibitor</keyword>
<keyword id="KW-1267">Proteomics identification</keyword>
<keyword id="KW-1185">Reference proteome</keyword>
<keyword id="KW-0722">Serine protease inhibitor</keyword>
<keyword id="KW-0732">Signal</keyword>
<protein>
    <recommendedName>
        <fullName evidence="7">Alpha-1-antitrypsin-related protein</fullName>
        <shortName evidence="6">AAT-related protein</shortName>
    </recommendedName>
    <alternativeName>
        <fullName>Protease inhibitor 1-like</fullName>
    </alternativeName>
    <alternativeName>
        <fullName>Serpin A2</fullName>
    </alternativeName>
</protein>
<comment type="function">
    <text>Putative serine protease inhibitor.</text>
</comment>
<comment type="subunit">
    <text evidence="4">Interacts with CANX and PDIA3.</text>
</comment>
<comment type="subcellular location">
    <subcellularLocation>
        <location evidence="4">Endoplasmic reticulum</location>
    </subcellularLocation>
</comment>
<comment type="tissue specificity">
    <text evidence="3 4">Expressed in the liver, leukocytes and testis. Also detected in brain, colon, uterus, esophagus, spleen, trachea, kidney and lung.</text>
</comment>
<comment type="domain">
    <text evidence="1">The reactive center loop (RCL) extends out from the body of the protein and directs binding to the target protease. The protease cleaves the serpin at the reactive site within the RCL, establishing a covalent linkage between the carboxyl group of the serpin reactive site and the serine hydroxyl of the protease. The resulting inactive serpin-protease complex is highly stable (By similarity).</text>
</comment>
<comment type="PTM">
    <text evidence="4">Glycosylated.</text>
</comment>
<comment type="polymorphism">
    <text evidence="3 4 5">The SERPINA2 gene is highly polymorphic. Deletions, frameshift mutations and a critical start codon variation (ATG-&gt;ATA, dbSNP:rs1956172) have been found in some populations. Population studies suggest that a pseudogenization process may be ongoing in humans (PubMed:17135331, PubMed:23826168, PubMed:9383284). 3 potentially functional alleles, V1, V2 and V3, have been described in the literature. The sequence shown in this entry is that of allele V2 (PubMed:23826168).</text>
</comment>
<comment type="similarity">
    <text evidence="8">Belongs to the serpin family.</text>
</comment>
<organism>
    <name type="scientific">Homo sapiens</name>
    <name type="common">Human</name>
    <dbReference type="NCBI Taxonomy" id="9606"/>
    <lineage>
        <taxon>Eukaryota</taxon>
        <taxon>Metazoa</taxon>
        <taxon>Chordata</taxon>
        <taxon>Craniata</taxon>
        <taxon>Vertebrata</taxon>
        <taxon>Euteleostomi</taxon>
        <taxon>Mammalia</taxon>
        <taxon>Eutheria</taxon>
        <taxon>Euarchontoglires</taxon>
        <taxon>Primates</taxon>
        <taxon>Haplorrhini</taxon>
        <taxon>Catarrhini</taxon>
        <taxon>Hominidae</taxon>
        <taxon>Homo</taxon>
    </lineage>
</organism>
<sequence length="421" mass="47707">MPFSVSWGILLLAGLCCLVPSSLVEDPQEDAAQKTDTSHHDQGDWEDLACQKISYNVTDLAFDLYKELADLSQTSNVLVTPTSVAMAFAMLSLGTKADTRTEILEGLNVNLTETPEAKIHECFQQVLQALSRPDTRLQLTTGSSLFVNKSMKLVDTFLEDTKKLYHSEASSINFRDTEEAKEQINNYVEKRTGRKVVDLVKHLKKDTSLALVDYISFHGKWKDKFKAEHIMVEGFHVDDKTIIRVPMINHLGRFDIHRDRELSSWVLAQHYVGNATAFFILPDPKKMWQLEEKLTYSHLENIQRAFDIRSINLHFPKLSISGTYKLKRVLRNLGITKIFSNEADLSGVSQEAPLKLSKAVHVAVLTIDEKGTEATGAPHLEEKAWSKYQTVMFNRPFLVIIKDDITNFPLFIGKVVNPTQK</sequence>
<accession>P20848</accession>
<accession>A0A0G2JPK4</accession>
<accession>S4UD68</accession>
<feature type="signal peptide" evidence="2">
    <location>
        <begin position="1"/>
        <end position="21"/>
    </location>
</feature>
<feature type="chain" id="PRO_0000032410" description="Alpha-1-antitrypsin-related protein">
    <location>
        <begin position="22"/>
        <end position="421"/>
    </location>
</feature>
<feature type="site" description="Reactive bond" evidence="2">
    <location>
        <begin position="385"/>
        <end position="386"/>
    </location>
</feature>
<feature type="glycosylation site" description="N-linked (GlcNAc...) asparagine" evidence="2">
    <location>
        <position position="56"/>
    </location>
</feature>
<feature type="glycosylation site" description="N-linked (GlcNAc...) asparagine" evidence="2">
    <location>
        <position position="110"/>
    </location>
</feature>
<feature type="glycosylation site" description="N-linked (GlcNAc...) asparagine" evidence="2">
    <location>
        <position position="148"/>
    </location>
</feature>
<feature type="glycosylation site" description="N-linked (GlcNAc...) asparagine" evidence="2">
    <location>
        <position position="274"/>
    </location>
</feature>
<feature type="sequence variant" id="VAR_070190" description="In allele V1 and allele V3; dbSNP:rs2089497656." evidence="4">
    <original>L</original>
    <variation>P</variation>
    <location>
        <position position="330"/>
    </location>
</feature>
<feature type="sequence variant" id="VAR_070191" description="In allele V1; dbSNP:rs2089497643." evidence="4">
    <original>E</original>
    <variation>K</variation>
    <location>
        <position position="342"/>
    </location>
</feature>
<feature type="sequence conflict" description="In Ref. 1; AAA51544 and 2; AGI62067." evidence="8" ref="1 2">
    <original>I</original>
    <variation>V</variation>
    <location>
        <position position="9"/>
    </location>
</feature>
<feature type="sequence conflict" description="In Ref. 1; AAA51544." evidence="8" ref="1">
    <original>E</original>
    <variation>G</variation>
    <location>
        <position position="29"/>
    </location>
</feature>
<feature type="sequence conflict" description="In Ref. 1; AAA51544." evidence="8" ref="1">
    <original>ELADLSQTSN</original>
    <variation>SWLIYHNQH</variation>
    <location>
        <begin position="67"/>
        <end position="76"/>
    </location>
</feature>
<feature type="sequence conflict" description="In Ref. 1; AAA51544." evidence="8" ref="1">
    <original>A</original>
    <variation>R</variation>
    <location>
        <position position="89"/>
    </location>
</feature>
<feature type="sequence conflict" description="In Ref. 1; AAA51544 and 2; AGI62067." evidence="8" ref="1 2">
    <original>H</original>
    <variation>R</variation>
    <location>
        <position position="229"/>
    </location>
</feature>
<feature type="sequence conflict" description="In Ref. 1; AAA51544." evidence="8" ref="1">
    <original>DD</original>
    <variation>EY</variation>
    <location>
        <begin position="403"/>
        <end position="404"/>
    </location>
</feature>
<name>A1ATR_HUMAN</name>